<feature type="chain" id="PRO_0000193350" description="Ubiquinone/menaquinone biosynthesis C-methyltransferase UbiE">
    <location>
        <begin position="1"/>
        <end position="260"/>
    </location>
</feature>
<feature type="binding site" evidence="1">
    <location>
        <position position="83"/>
    </location>
    <ligand>
        <name>S-adenosyl-L-methionine</name>
        <dbReference type="ChEBI" id="CHEBI:59789"/>
    </ligand>
</feature>
<feature type="binding site" evidence="1">
    <location>
        <position position="104"/>
    </location>
    <ligand>
        <name>S-adenosyl-L-methionine</name>
        <dbReference type="ChEBI" id="CHEBI:59789"/>
    </ligand>
</feature>
<feature type="binding site" evidence="1">
    <location>
        <begin position="132"/>
        <end position="133"/>
    </location>
    <ligand>
        <name>S-adenosyl-L-methionine</name>
        <dbReference type="ChEBI" id="CHEBI:59789"/>
    </ligand>
</feature>
<feature type="binding site" evidence="1">
    <location>
        <position position="149"/>
    </location>
    <ligand>
        <name>S-adenosyl-L-methionine</name>
        <dbReference type="ChEBI" id="CHEBI:59789"/>
    </ligand>
</feature>
<reference key="1">
    <citation type="journal article" date="2003" name="Genome Res.">
        <title>Comparative genome analysis of Vibrio vulnificus, a marine pathogen.</title>
        <authorList>
            <person name="Chen C.-Y."/>
            <person name="Wu K.-M."/>
            <person name="Chang Y.-C."/>
            <person name="Chang C.-H."/>
            <person name="Tsai H.-C."/>
            <person name="Liao T.-L."/>
            <person name="Liu Y.-M."/>
            <person name="Chen H.-J."/>
            <person name="Shen A.B.-T."/>
            <person name="Li J.-C."/>
            <person name="Su T.-L."/>
            <person name="Shao C.-P."/>
            <person name="Lee C.-T."/>
            <person name="Hor L.-I."/>
            <person name="Tsai S.-F."/>
        </authorList>
    </citation>
    <scope>NUCLEOTIDE SEQUENCE [LARGE SCALE GENOMIC DNA]</scope>
    <source>
        <strain>YJ016</strain>
    </source>
</reference>
<comment type="function">
    <text evidence="1">Methyltransferase required for the conversion of demethylmenaquinol (DMKH2) to menaquinol (MKH2) and the conversion of 2-polyprenyl-6-methoxy-1,4-benzoquinol (DDMQH2) to 2-polyprenyl-3-methyl-6-methoxy-1,4-benzoquinol (DMQH2).</text>
</comment>
<comment type="catalytic activity">
    <reaction evidence="1">
        <text>a 2-demethylmenaquinol + S-adenosyl-L-methionine = a menaquinol + S-adenosyl-L-homocysteine + H(+)</text>
        <dbReference type="Rhea" id="RHEA:42640"/>
        <dbReference type="Rhea" id="RHEA-COMP:9539"/>
        <dbReference type="Rhea" id="RHEA-COMP:9563"/>
        <dbReference type="ChEBI" id="CHEBI:15378"/>
        <dbReference type="ChEBI" id="CHEBI:18151"/>
        <dbReference type="ChEBI" id="CHEBI:55437"/>
        <dbReference type="ChEBI" id="CHEBI:57856"/>
        <dbReference type="ChEBI" id="CHEBI:59789"/>
        <dbReference type="EC" id="2.1.1.163"/>
    </reaction>
</comment>
<comment type="catalytic activity">
    <reaction evidence="1">
        <text>a 2-methoxy-6-(all-trans-polyprenyl)benzene-1,4-diol + S-adenosyl-L-methionine = a 5-methoxy-2-methyl-3-(all-trans-polyprenyl)benzene-1,4-diol + S-adenosyl-L-homocysteine + H(+)</text>
        <dbReference type="Rhea" id="RHEA:28286"/>
        <dbReference type="Rhea" id="RHEA-COMP:10858"/>
        <dbReference type="Rhea" id="RHEA-COMP:10859"/>
        <dbReference type="ChEBI" id="CHEBI:15378"/>
        <dbReference type="ChEBI" id="CHEBI:57856"/>
        <dbReference type="ChEBI" id="CHEBI:59789"/>
        <dbReference type="ChEBI" id="CHEBI:84166"/>
        <dbReference type="ChEBI" id="CHEBI:84167"/>
        <dbReference type="EC" id="2.1.1.201"/>
    </reaction>
</comment>
<comment type="pathway">
    <text evidence="1">Quinol/quinone metabolism; menaquinone biosynthesis; menaquinol from 1,4-dihydroxy-2-naphthoate: step 2/2.</text>
</comment>
<comment type="pathway">
    <text evidence="1">Cofactor biosynthesis; ubiquinone biosynthesis.</text>
</comment>
<comment type="similarity">
    <text evidence="1">Belongs to the class I-like SAM-binding methyltransferase superfamily. MenG/UbiE family.</text>
</comment>
<name>UBIE_VIBVY</name>
<keyword id="KW-0474">Menaquinone biosynthesis</keyword>
<keyword id="KW-0489">Methyltransferase</keyword>
<keyword id="KW-0949">S-adenosyl-L-methionine</keyword>
<keyword id="KW-0808">Transferase</keyword>
<keyword id="KW-0831">Ubiquinone biosynthesis</keyword>
<dbReference type="EC" id="2.1.1.163" evidence="1"/>
<dbReference type="EC" id="2.1.1.201" evidence="1"/>
<dbReference type="EMBL" id="BA000037">
    <property type="protein sequence ID" value="BAC92941.1"/>
    <property type="molecule type" value="Genomic_DNA"/>
</dbReference>
<dbReference type="RefSeq" id="WP_011078975.1">
    <property type="nucleotide sequence ID" value="NC_005139.1"/>
</dbReference>
<dbReference type="SMR" id="Q7MQ33"/>
<dbReference type="STRING" id="672.VV93_v1c01640"/>
<dbReference type="GeneID" id="93895206"/>
<dbReference type="KEGG" id="vvy:VV0177"/>
<dbReference type="eggNOG" id="COG2226">
    <property type="taxonomic scope" value="Bacteria"/>
</dbReference>
<dbReference type="HOGENOM" id="CLU_037990_0_0_6"/>
<dbReference type="UniPathway" id="UPA00079">
    <property type="reaction ID" value="UER00169"/>
</dbReference>
<dbReference type="UniPathway" id="UPA00232"/>
<dbReference type="Proteomes" id="UP000002675">
    <property type="component" value="Chromosome I"/>
</dbReference>
<dbReference type="GO" id="GO:0008425">
    <property type="term" value="F:2-methoxy-6-polyprenyl-1,4-benzoquinol methyltransferase activity"/>
    <property type="evidence" value="ECO:0007669"/>
    <property type="project" value="UniProtKB-UniRule"/>
</dbReference>
<dbReference type="GO" id="GO:0043770">
    <property type="term" value="F:demethylmenaquinone methyltransferase activity"/>
    <property type="evidence" value="ECO:0007669"/>
    <property type="project" value="UniProtKB-UniRule"/>
</dbReference>
<dbReference type="GO" id="GO:0009060">
    <property type="term" value="P:aerobic respiration"/>
    <property type="evidence" value="ECO:0007669"/>
    <property type="project" value="UniProtKB-UniRule"/>
</dbReference>
<dbReference type="GO" id="GO:0009234">
    <property type="term" value="P:menaquinone biosynthetic process"/>
    <property type="evidence" value="ECO:0007669"/>
    <property type="project" value="UniProtKB-UniRule"/>
</dbReference>
<dbReference type="GO" id="GO:0032259">
    <property type="term" value="P:methylation"/>
    <property type="evidence" value="ECO:0007669"/>
    <property type="project" value="UniProtKB-KW"/>
</dbReference>
<dbReference type="CDD" id="cd02440">
    <property type="entry name" value="AdoMet_MTases"/>
    <property type="match status" value="1"/>
</dbReference>
<dbReference type="FunFam" id="3.40.50.150:FF:000014">
    <property type="entry name" value="Ubiquinone/menaquinone biosynthesis C-methyltransferase UbiE"/>
    <property type="match status" value="1"/>
</dbReference>
<dbReference type="Gene3D" id="3.40.50.150">
    <property type="entry name" value="Vaccinia Virus protein VP39"/>
    <property type="match status" value="1"/>
</dbReference>
<dbReference type="HAMAP" id="MF_01813">
    <property type="entry name" value="MenG_UbiE_methyltr"/>
    <property type="match status" value="1"/>
</dbReference>
<dbReference type="InterPro" id="IPR029063">
    <property type="entry name" value="SAM-dependent_MTases_sf"/>
</dbReference>
<dbReference type="InterPro" id="IPR004033">
    <property type="entry name" value="UbiE/COQ5_MeTrFase"/>
</dbReference>
<dbReference type="InterPro" id="IPR023576">
    <property type="entry name" value="UbiE/COQ5_MeTrFase_CS"/>
</dbReference>
<dbReference type="NCBIfam" id="TIGR01934">
    <property type="entry name" value="MenG_MenH_UbiE"/>
    <property type="match status" value="1"/>
</dbReference>
<dbReference type="NCBIfam" id="NF001240">
    <property type="entry name" value="PRK00216.1-1"/>
    <property type="match status" value="1"/>
</dbReference>
<dbReference type="NCBIfam" id="NF001244">
    <property type="entry name" value="PRK00216.1-5"/>
    <property type="match status" value="1"/>
</dbReference>
<dbReference type="PANTHER" id="PTHR43591:SF24">
    <property type="entry name" value="2-METHOXY-6-POLYPRENYL-1,4-BENZOQUINOL METHYLASE, MITOCHONDRIAL"/>
    <property type="match status" value="1"/>
</dbReference>
<dbReference type="PANTHER" id="PTHR43591">
    <property type="entry name" value="METHYLTRANSFERASE"/>
    <property type="match status" value="1"/>
</dbReference>
<dbReference type="Pfam" id="PF01209">
    <property type="entry name" value="Ubie_methyltran"/>
    <property type="match status" value="1"/>
</dbReference>
<dbReference type="SUPFAM" id="SSF53335">
    <property type="entry name" value="S-adenosyl-L-methionine-dependent methyltransferases"/>
    <property type="match status" value="1"/>
</dbReference>
<dbReference type="PROSITE" id="PS51608">
    <property type="entry name" value="SAM_MT_UBIE"/>
    <property type="match status" value="1"/>
</dbReference>
<dbReference type="PROSITE" id="PS01183">
    <property type="entry name" value="UBIE_1"/>
    <property type="match status" value="1"/>
</dbReference>
<dbReference type="PROSITE" id="PS01184">
    <property type="entry name" value="UBIE_2"/>
    <property type="match status" value="1"/>
</dbReference>
<organism>
    <name type="scientific">Vibrio vulnificus (strain YJ016)</name>
    <dbReference type="NCBI Taxonomy" id="196600"/>
    <lineage>
        <taxon>Bacteria</taxon>
        <taxon>Pseudomonadati</taxon>
        <taxon>Pseudomonadota</taxon>
        <taxon>Gammaproteobacteria</taxon>
        <taxon>Vibrionales</taxon>
        <taxon>Vibrionaceae</taxon>
        <taxon>Vibrio</taxon>
    </lineage>
</organism>
<sequence>MTDISVQSNTALESSETTHFGFTTVAKEEKVAKVAQVFHSVAAKYDIMNDLMSGGIHRLWKRFTIDCSGARPGQRVLDLGGGTGDLTAKFSRIVGEKGHVILADINNSMLNVGRDKLRDSGIVGNVHYVQANAEELPFPDDYFDIITISFCLRNVTDKDKALRSMFRVLKPGGRLLVLEFSKPVFDPLSKVYDAYSFHLLPKMGELVANDADSYRYLAESIRMHPDQETLKGMMQEAGFENTSYYNLTGGIVALHRGYKF</sequence>
<evidence type="ECO:0000255" key="1">
    <source>
        <dbReference type="HAMAP-Rule" id="MF_01813"/>
    </source>
</evidence>
<protein>
    <recommendedName>
        <fullName evidence="1">Ubiquinone/menaquinone biosynthesis C-methyltransferase UbiE</fullName>
        <ecNumber evidence="1">2.1.1.163</ecNumber>
        <ecNumber evidence="1">2.1.1.201</ecNumber>
    </recommendedName>
    <alternativeName>
        <fullName evidence="1">2-methoxy-6-polyprenyl-1,4-benzoquinol methylase</fullName>
    </alternativeName>
    <alternativeName>
        <fullName evidence="1">Demethylmenaquinone methyltransferase</fullName>
    </alternativeName>
</protein>
<accession>Q7MQ33</accession>
<gene>
    <name evidence="1" type="primary">ubiE</name>
    <name type="ordered locus">VV0177</name>
</gene>
<proteinExistence type="inferred from homology"/>